<reference key="1">
    <citation type="journal article" date="2003" name="J. Bacteriol.">
        <title>Complete genome sequence of the ammonia-oxidizing bacterium and obligate chemolithoautotroph Nitrosomonas europaea.</title>
        <authorList>
            <person name="Chain P."/>
            <person name="Lamerdin J.E."/>
            <person name="Larimer F.W."/>
            <person name="Regala W."/>
            <person name="Lao V."/>
            <person name="Land M.L."/>
            <person name="Hauser L."/>
            <person name="Hooper A.B."/>
            <person name="Klotz M.G."/>
            <person name="Norton J."/>
            <person name="Sayavedra-Soto L.A."/>
            <person name="Arciero D.M."/>
            <person name="Hommes N.G."/>
            <person name="Whittaker M.M."/>
            <person name="Arp D.J."/>
        </authorList>
    </citation>
    <scope>NUCLEOTIDE SEQUENCE [LARGE SCALE GENOMIC DNA]</scope>
    <source>
        <strain>ATCC 19718 / CIP 103999 / KCTC 2705 / NBRC 14298</strain>
    </source>
</reference>
<proteinExistence type="inferred from homology"/>
<name>PGK_NITEU</name>
<evidence type="ECO:0000255" key="1">
    <source>
        <dbReference type="HAMAP-Rule" id="MF_00145"/>
    </source>
</evidence>
<gene>
    <name evidence="1" type="primary">pgk</name>
    <name type="ordered locus">NE0326</name>
</gene>
<feature type="chain" id="PRO_0000145977" description="Phosphoglycerate kinase">
    <location>
        <begin position="1"/>
        <end position="392"/>
    </location>
</feature>
<feature type="binding site" evidence="1">
    <location>
        <begin position="21"/>
        <end position="23"/>
    </location>
    <ligand>
        <name>substrate</name>
    </ligand>
</feature>
<feature type="binding site" evidence="1">
    <location>
        <position position="36"/>
    </location>
    <ligand>
        <name>substrate</name>
    </ligand>
</feature>
<feature type="binding site" evidence="1">
    <location>
        <begin position="59"/>
        <end position="62"/>
    </location>
    <ligand>
        <name>substrate</name>
    </ligand>
</feature>
<feature type="binding site" evidence="1">
    <location>
        <position position="114"/>
    </location>
    <ligand>
        <name>substrate</name>
    </ligand>
</feature>
<feature type="binding site" evidence="1">
    <location>
        <position position="147"/>
    </location>
    <ligand>
        <name>substrate</name>
    </ligand>
</feature>
<feature type="binding site" evidence="1">
    <location>
        <position position="198"/>
    </location>
    <ligand>
        <name>ATP</name>
        <dbReference type="ChEBI" id="CHEBI:30616"/>
    </ligand>
</feature>
<feature type="binding site" evidence="1">
    <location>
        <position position="320"/>
    </location>
    <ligand>
        <name>ATP</name>
        <dbReference type="ChEBI" id="CHEBI:30616"/>
    </ligand>
</feature>
<feature type="binding site" evidence="1">
    <location>
        <begin position="346"/>
        <end position="349"/>
    </location>
    <ligand>
        <name>ATP</name>
        <dbReference type="ChEBI" id="CHEBI:30616"/>
    </ligand>
</feature>
<accession>Q82XE8</accession>
<comment type="catalytic activity">
    <reaction evidence="1">
        <text>(2R)-3-phosphoglycerate + ATP = (2R)-3-phospho-glyceroyl phosphate + ADP</text>
        <dbReference type="Rhea" id="RHEA:14801"/>
        <dbReference type="ChEBI" id="CHEBI:30616"/>
        <dbReference type="ChEBI" id="CHEBI:57604"/>
        <dbReference type="ChEBI" id="CHEBI:58272"/>
        <dbReference type="ChEBI" id="CHEBI:456216"/>
        <dbReference type="EC" id="2.7.2.3"/>
    </reaction>
</comment>
<comment type="pathway">
    <text evidence="1">Carbohydrate degradation; glycolysis; pyruvate from D-glyceraldehyde 3-phosphate: step 2/5.</text>
</comment>
<comment type="subunit">
    <text evidence="1">Monomer.</text>
</comment>
<comment type="subcellular location">
    <subcellularLocation>
        <location evidence="1">Cytoplasm</location>
    </subcellularLocation>
</comment>
<comment type="similarity">
    <text evidence="1">Belongs to the phosphoglycerate kinase family.</text>
</comment>
<organism>
    <name type="scientific">Nitrosomonas europaea (strain ATCC 19718 / CIP 103999 / KCTC 2705 / NBRC 14298)</name>
    <dbReference type="NCBI Taxonomy" id="228410"/>
    <lineage>
        <taxon>Bacteria</taxon>
        <taxon>Pseudomonadati</taxon>
        <taxon>Pseudomonadota</taxon>
        <taxon>Betaproteobacteria</taxon>
        <taxon>Nitrosomonadales</taxon>
        <taxon>Nitrosomonadaceae</taxon>
        <taxon>Nitrosomonas</taxon>
    </lineage>
</organism>
<protein>
    <recommendedName>
        <fullName evidence="1">Phosphoglycerate kinase</fullName>
        <ecNumber evidence="1">2.7.2.3</ecNumber>
    </recommendedName>
</protein>
<sequence length="392" mass="41902">MSVIKLVDLDLKNKRVFIRADLNVPVKDGKVTSDARITASMATINHCLKQGAKVMVTSHLGRPEEGVWTEENSLQPVADDIARRLGKPVRLIKDWVEGGFEVASGELVVLENCRINKGEKKNLEETAKKYASLCDVFVMDAFGTAHRAEASTHGIAKYAPIACAGILLTEELDALTKALHQPAHPLVAIVGGSKVSTKLTVLESLAEKVDQLVVGGGIANTFLKAAGNNIGKSLCEDELVPVAKSLMDKMNKRNATIPIAVDVVVGKKFAEDEAAVLKAANAVSDDDMIFDIGPESAQELVDIIMKAGTVVWNGPVGVFEFDQFGEGTRAIAKAIAETDAFTLAGGGDTIAAIQKYDIYDKVSYISTAGGAFLEFLEGKKLPAVEILELRAK</sequence>
<dbReference type="EC" id="2.7.2.3" evidence="1"/>
<dbReference type="EMBL" id="AL954747">
    <property type="protein sequence ID" value="CAD84237.1"/>
    <property type="molecule type" value="Genomic_DNA"/>
</dbReference>
<dbReference type="RefSeq" id="WP_011110961.1">
    <property type="nucleotide sequence ID" value="NC_004757.1"/>
</dbReference>
<dbReference type="SMR" id="Q82XE8"/>
<dbReference type="STRING" id="228410.NE0326"/>
<dbReference type="GeneID" id="87103532"/>
<dbReference type="KEGG" id="neu:NE0326"/>
<dbReference type="eggNOG" id="COG0126">
    <property type="taxonomic scope" value="Bacteria"/>
</dbReference>
<dbReference type="HOGENOM" id="CLU_025427_0_2_4"/>
<dbReference type="OrthoDB" id="9808460at2"/>
<dbReference type="PhylomeDB" id="Q82XE8"/>
<dbReference type="UniPathway" id="UPA00109">
    <property type="reaction ID" value="UER00185"/>
</dbReference>
<dbReference type="Proteomes" id="UP000001416">
    <property type="component" value="Chromosome"/>
</dbReference>
<dbReference type="GO" id="GO:0005829">
    <property type="term" value="C:cytosol"/>
    <property type="evidence" value="ECO:0007669"/>
    <property type="project" value="TreeGrafter"/>
</dbReference>
<dbReference type="GO" id="GO:0043531">
    <property type="term" value="F:ADP binding"/>
    <property type="evidence" value="ECO:0007669"/>
    <property type="project" value="TreeGrafter"/>
</dbReference>
<dbReference type="GO" id="GO:0005524">
    <property type="term" value="F:ATP binding"/>
    <property type="evidence" value="ECO:0007669"/>
    <property type="project" value="UniProtKB-KW"/>
</dbReference>
<dbReference type="GO" id="GO:0004618">
    <property type="term" value="F:phosphoglycerate kinase activity"/>
    <property type="evidence" value="ECO:0007669"/>
    <property type="project" value="UniProtKB-UniRule"/>
</dbReference>
<dbReference type="GO" id="GO:0006094">
    <property type="term" value="P:gluconeogenesis"/>
    <property type="evidence" value="ECO:0007669"/>
    <property type="project" value="TreeGrafter"/>
</dbReference>
<dbReference type="GO" id="GO:0006096">
    <property type="term" value="P:glycolytic process"/>
    <property type="evidence" value="ECO:0007669"/>
    <property type="project" value="UniProtKB-UniRule"/>
</dbReference>
<dbReference type="FunFam" id="3.40.50.1260:FF:000001">
    <property type="entry name" value="Phosphoglycerate kinase"/>
    <property type="match status" value="1"/>
</dbReference>
<dbReference type="FunFam" id="3.40.50.1260:FF:000002">
    <property type="entry name" value="Phosphoglycerate kinase"/>
    <property type="match status" value="1"/>
</dbReference>
<dbReference type="Gene3D" id="3.40.50.1260">
    <property type="entry name" value="Phosphoglycerate kinase, N-terminal domain"/>
    <property type="match status" value="2"/>
</dbReference>
<dbReference type="HAMAP" id="MF_00145">
    <property type="entry name" value="Phosphoglyc_kinase"/>
    <property type="match status" value="1"/>
</dbReference>
<dbReference type="InterPro" id="IPR001576">
    <property type="entry name" value="Phosphoglycerate_kinase"/>
</dbReference>
<dbReference type="InterPro" id="IPR015911">
    <property type="entry name" value="Phosphoglycerate_kinase_CS"/>
</dbReference>
<dbReference type="InterPro" id="IPR015824">
    <property type="entry name" value="Phosphoglycerate_kinase_N"/>
</dbReference>
<dbReference type="InterPro" id="IPR036043">
    <property type="entry name" value="Phosphoglycerate_kinase_sf"/>
</dbReference>
<dbReference type="PANTHER" id="PTHR11406">
    <property type="entry name" value="PHOSPHOGLYCERATE KINASE"/>
    <property type="match status" value="1"/>
</dbReference>
<dbReference type="PANTHER" id="PTHR11406:SF23">
    <property type="entry name" value="PHOSPHOGLYCERATE KINASE 1, CHLOROPLASTIC-RELATED"/>
    <property type="match status" value="1"/>
</dbReference>
<dbReference type="Pfam" id="PF00162">
    <property type="entry name" value="PGK"/>
    <property type="match status" value="1"/>
</dbReference>
<dbReference type="PIRSF" id="PIRSF000724">
    <property type="entry name" value="Pgk"/>
    <property type="match status" value="1"/>
</dbReference>
<dbReference type="PRINTS" id="PR00477">
    <property type="entry name" value="PHGLYCKINASE"/>
</dbReference>
<dbReference type="SUPFAM" id="SSF53748">
    <property type="entry name" value="Phosphoglycerate kinase"/>
    <property type="match status" value="1"/>
</dbReference>
<dbReference type="PROSITE" id="PS00111">
    <property type="entry name" value="PGLYCERATE_KINASE"/>
    <property type="match status" value="1"/>
</dbReference>
<keyword id="KW-0067">ATP-binding</keyword>
<keyword id="KW-0963">Cytoplasm</keyword>
<keyword id="KW-0324">Glycolysis</keyword>
<keyword id="KW-0418">Kinase</keyword>
<keyword id="KW-0547">Nucleotide-binding</keyword>
<keyword id="KW-1185">Reference proteome</keyword>
<keyword id="KW-0808">Transferase</keyword>